<gene>
    <name evidence="1" type="primary">gltX2</name>
    <name type="ordered locus">HH_0582</name>
</gene>
<organism>
    <name type="scientific">Helicobacter hepaticus (strain ATCC 51449 / 3B1)</name>
    <dbReference type="NCBI Taxonomy" id="235279"/>
    <lineage>
        <taxon>Bacteria</taxon>
        <taxon>Pseudomonadati</taxon>
        <taxon>Campylobacterota</taxon>
        <taxon>Epsilonproteobacteria</taxon>
        <taxon>Campylobacterales</taxon>
        <taxon>Helicobacteraceae</taxon>
        <taxon>Helicobacter</taxon>
    </lineage>
</organism>
<reference key="1">
    <citation type="journal article" date="2003" name="Proc. Natl. Acad. Sci. U.S.A.">
        <title>The complete genome sequence of the carcinogenic bacterium Helicobacter hepaticus.</title>
        <authorList>
            <person name="Suerbaum S."/>
            <person name="Josenhans C."/>
            <person name="Sterzenbach T."/>
            <person name="Drescher B."/>
            <person name="Brandt P."/>
            <person name="Bell M."/>
            <person name="Droege M."/>
            <person name="Fartmann B."/>
            <person name="Fischer H.-P."/>
            <person name="Ge Z."/>
            <person name="Hoerster A."/>
            <person name="Holland R."/>
            <person name="Klein K."/>
            <person name="Koenig J."/>
            <person name="Macko L."/>
            <person name="Mendz G.L."/>
            <person name="Nyakatura G."/>
            <person name="Schauer D.B."/>
            <person name="Shen Z."/>
            <person name="Weber J."/>
            <person name="Frosch M."/>
            <person name="Fox J.G."/>
        </authorList>
    </citation>
    <scope>NUCLEOTIDE SEQUENCE [LARGE SCALE GENOMIC DNA]</scope>
    <source>
        <strain>ATCC 51449 / 3B1</strain>
    </source>
</reference>
<comment type="function">
    <text evidence="1">Catalyzes the attachment of glutamate to tRNA(Glu) in a two-step reaction: glutamate is first activated by ATP to form Glu-AMP and then transferred to the acceptor end of tRNA(Glu).</text>
</comment>
<comment type="catalytic activity">
    <reaction evidence="1">
        <text>tRNA(Glu) + L-glutamate + ATP = L-glutamyl-tRNA(Glu) + AMP + diphosphate</text>
        <dbReference type="Rhea" id="RHEA:23540"/>
        <dbReference type="Rhea" id="RHEA-COMP:9663"/>
        <dbReference type="Rhea" id="RHEA-COMP:9680"/>
        <dbReference type="ChEBI" id="CHEBI:29985"/>
        <dbReference type="ChEBI" id="CHEBI:30616"/>
        <dbReference type="ChEBI" id="CHEBI:33019"/>
        <dbReference type="ChEBI" id="CHEBI:78442"/>
        <dbReference type="ChEBI" id="CHEBI:78520"/>
        <dbReference type="ChEBI" id="CHEBI:456215"/>
        <dbReference type="EC" id="6.1.1.17"/>
    </reaction>
</comment>
<comment type="subunit">
    <text evidence="1">Monomer.</text>
</comment>
<comment type="subcellular location">
    <subcellularLocation>
        <location evidence="1">Cytoplasm</location>
    </subcellularLocation>
</comment>
<comment type="similarity">
    <text evidence="1">Belongs to the class-I aminoacyl-tRNA synthetase family. Glutamate--tRNA ligase type 1 subfamily.</text>
</comment>
<proteinExistence type="inferred from homology"/>
<protein>
    <recommendedName>
        <fullName evidence="1">Glutamate--tRNA ligase 2</fullName>
        <ecNumber evidence="1">6.1.1.17</ecNumber>
    </recommendedName>
    <alternativeName>
        <fullName evidence="1">Glutamyl-tRNA synthetase 2</fullName>
        <shortName evidence="1">GluRS 2</shortName>
    </alternativeName>
</protein>
<accession>Q7VIM2</accession>
<evidence type="ECO:0000255" key="1">
    <source>
        <dbReference type="HAMAP-Rule" id="MF_00022"/>
    </source>
</evidence>
<dbReference type="EC" id="6.1.1.17" evidence="1"/>
<dbReference type="EMBL" id="AE017125">
    <property type="protein sequence ID" value="AAP77179.1"/>
    <property type="molecule type" value="Genomic_DNA"/>
</dbReference>
<dbReference type="RefSeq" id="WP_011115424.1">
    <property type="nucleotide sequence ID" value="NC_004917.1"/>
</dbReference>
<dbReference type="SMR" id="Q7VIM2"/>
<dbReference type="STRING" id="235279.HH_0582"/>
<dbReference type="KEGG" id="hhe:HH_0582"/>
<dbReference type="eggNOG" id="COG0008">
    <property type="taxonomic scope" value="Bacteria"/>
</dbReference>
<dbReference type="HOGENOM" id="CLU_015768_6_0_7"/>
<dbReference type="OrthoDB" id="9807503at2"/>
<dbReference type="Proteomes" id="UP000002495">
    <property type="component" value="Chromosome"/>
</dbReference>
<dbReference type="GO" id="GO:0005829">
    <property type="term" value="C:cytosol"/>
    <property type="evidence" value="ECO:0007669"/>
    <property type="project" value="TreeGrafter"/>
</dbReference>
<dbReference type="GO" id="GO:0005524">
    <property type="term" value="F:ATP binding"/>
    <property type="evidence" value="ECO:0007669"/>
    <property type="project" value="UniProtKB-UniRule"/>
</dbReference>
<dbReference type="GO" id="GO:0004818">
    <property type="term" value="F:glutamate-tRNA ligase activity"/>
    <property type="evidence" value="ECO:0007669"/>
    <property type="project" value="UniProtKB-UniRule"/>
</dbReference>
<dbReference type="GO" id="GO:0000049">
    <property type="term" value="F:tRNA binding"/>
    <property type="evidence" value="ECO:0007669"/>
    <property type="project" value="InterPro"/>
</dbReference>
<dbReference type="GO" id="GO:0006424">
    <property type="term" value="P:glutamyl-tRNA aminoacylation"/>
    <property type="evidence" value="ECO:0007669"/>
    <property type="project" value="UniProtKB-UniRule"/>
</dbReference>
<dbReference type="Gene3D" id="1.10.10.350">
    <property type="match status" value="1"/>
</dbReference>
<dbReference type="Gene3D" id="3.40.50.620">
    <property type="entry name" value="HUPs"/>
    <property type="match status" value="1"/>
</dbReference>
<dbReference type="HAMAP" id="MF_00022">
    <property type="entry name" value="Glu_tRNA_synth_type1"/>
    <property type="match status" value="1"/>
</dbReference>
<dbReference type="InterPro" id="IPR045462">
    <property type="entry name" value="aa-tRNA-synth_I_cd-bd"/>
</dbReference>
<dbReference type="InterPro" id="IPR020751">
    <property type="entry name" value="aa-tRNA-synth_I_codon-bd_sub2"/>
</dbReference>
<dbReference type="InterPro" id="IPR001412">
    <property type="entry name" value="aa-tRNA-synth_I_CS"/>
</dbReference>
<dbReference type="InterPro" id="IPR008925">
    <property type="entry name" value="aa_tRNA-synth_I_cd-bd_sf"/>
</dbReference>
<dbReference type="InterPro" id="IPR004527">
    <property type="entry name" value="Glu-tRNA-ligase_bac/mito"/>
</dbReference>
<dbReference type="InterPro" id="IPR000924">
    <property type="entry name" value="Glu/Gln-tRNA-synth"/>
</dbReference>
<dbReference type="InterPro" id="IPR020058">
    <property type="entry name" value="Glu/Gln-tRNA-synth_Ib_cat-dom"/>
</dbReference>
<dbReference type="InterPro" id="IPR049940">
    <property type="entry name" value="GluQ/Sye"/>
</dbReference>
<dbReference type="InterPro" id="IPR014729">
    <property type="entry name" value="Rossmann-like_a/b/a_fold"/>
</dbReference>
<dbReference type="NCBIfam" id="TIGR00464">
    <property type="entry name" value="gltX_bact"/>
    <property type="match status" value="1"/>
</dbReference>
<dbReference type="PANTHER" id="PTHR43311">
    <property type="entry name" value="GLUTAMATE--TRNA LIGASE"/>
    <property type="match status" value="1"/>
</dbReference>
<dbReference type="PANTHER" id="PTHR43311:SF2">
    <property type="entry name" value="GLUTAMATE--TRNA LIGASE, MITOCHONDRIAL-RELATED"/>
    <property type="match status" value="1"/>
</dbReference>
<dbReference type="Pfam" id="PF19269">
    <property type="entry name" value="Anticodon_2"/>
    <property type="match status" value="1"/>
</dbReference>
<dbReference type="Pfam" id="PF00749">
    <property type="entry name" value="tRNA-synt_1c"/>
    <property type="match status" value="1"/>
</dbReference>
<dbReference type="PRINTS" id="PR00987">
    <property type="entry name" value="TRNASYNTHGLU"/>
</dbReference>
<dbReference type="SUPFAM" id="SSF48163">
    <property type="entry name" value="An anticodon-binding domain of class I aminoacyl-tRNA synthetases"/>
    <property type="match status" value="1"/>
</dbReference>
<dbReference type="SUPFAM" id="SSF52374">
    <property type="entry name" value="Nucleotidylyl transferase"/>
    <property type="match status" value="1"/>
</dbReference>
<dbReference type="PROSITE" id="PS00178">
    <property type="entry name" value="AA_TRNA_LIGASE_I"/>
    <property type="match status" value="1"/>
</dbReference>
<keyword id="KW-0030">Aminoacyl-tRNA synthetase</keyword>
<keyword id="KW-0067">ATP-binding</keyword>
<keyword id="KW-0963">Cytoplasm</keyword>
<keyword id="KW-0436">Ligase</keyword>
<keyword id="KW-0547">Nucleotide-binding</keyword>
<keyword id="KW-0648">Protein biosynthesis</keyword>
<keyword id="KW-1185">Reference proteome</keyword>
<sequence length="441" mass="51047">MLRFAPSPTGDMHIGNLRAAIFNYIIAKQQNQKFLIRIEDTDIARNIVDKDKEILNLLNLFGLLWDNLVYQSSNFERHRQLAQHLISKDLAFYCYCSKEFLESKRLEAKEQKKPFRYDPSWAEIEKSSNTKPVVRIRGASEAISFEDAIKGTLRFEAHEIDSFVILKEDGIPTYNFACAIDDMLYDISFIVRGEDHVSNTPRQILIHRALGYDKVLGYAHLPIILGESGSKMSKRDNASSVAWLLEEGFLPQAIMNYLISMGNHTPTEVFKLQDAYNWFDIKNIAKSPVKFDIKRLRFLNREHLKMLNEQEFALLLDSKDSSIGALGKLHLQEASTLNEIRSKIERIFSPKCIAQNEEGENFENECKILYDILHQMIESYDESLNDYDTFKNALMAKSSLKGKKFFKPLRILLTGQTQGLELSEIYPYLRFFLRDIVRLSK</sequence>
<feature type="chain" id="PRO_0000119575" description="Glutamate--tRNA ligase 2">
    <location>
        <begin position="1"/>
        <end position="441"/>
    </location>
</feature>
<feature type="short sequence motif" description="'HIGH' region" evidence="1">
    <location>
        <begin position="6"/>
        <end position="16"/>
    </location>
</feature>
<feature type="short sequence motif" description="'KMSKS' region" evidence="1">
    <location>
        <begin position="231"/>
        <end position="235"/>
    </location>
</feature>
<feature type="binding site" evidence="1">
    <location>
        <position position="234"/>
    </location>
    <ligand>
        <name>ATP</name>
        <dbReference type="ChEBI" id="CHEBI:30616"/>
    </ligand>
</feature>
<name>SYE2_HELHP</name>